<name>CAS1_PECAS</name>
<proteinExistence type="evidence at protein level"/>
<protein>
    <recommendedName>
        <fullName evidence="2">CRISPR-associated endonuclease Cas1</fullName>
        <ecNumber evidence="2">3.1.-.-</ecNumber>
    </recommendedName>
</protein>
<gene>
    <name evidence="2" type="primary">cas1</name>
    <name type="ordered locus">ECA3679</name>
</gene>
<evidence type="ECO:0000250" key="1"/>
<evidence type="ECO:0000255" key="2">
    <source>
        <dbReference type="HAMAP-Rule" id="MF_01470"/>
    </source>
</evidence>
<evidence type="ECO:0000269" key="3">
    <source>
    </source>
</evidence>
<evidence type="ECO:0000269" key="4">
    <source>
    </source>
</evidence>
<evidence type="ECO:0000269" key="5">
    <source>
    </source>
</evidence>
<evidence type="ECO:0007829" key="6">
    <source>
        <dbReference type="PDB" id="5FCL"/>
    </source>
</evidence>
<keyword id="KW-0002">3D-structure</keyword>
<keyword id="KW-0051">Antiviral defense</keyword>
<keyword id="KW-0238">DNA-binding</keyword>
<keyword id="KW-0255">Endonuclease</keyword>
<keyword id="KW-0378">Hydrolase</keyword>
<keyword id="KW-0460">Magnesium</keyword>
<keyword id="KW-0464">Manganese</keyword>
<keyword id="KW-0479">Metal-binding</keyword>
<keyword id="KW-0540">Nuclease</keyword>
<keyword id="KW-1185">Reference proteome</keyword>
<reference key="1">
    <citation type="journal article" date="2004" name="Proc. Natl. Acad. Sci. U.S.A.">
        <title>Genome sequence of the enterobacterial phytopathogen Erwinia carotovora subsp. atroseptica and characterization of virulence factors.</title>
        <authorList>
            <person name="Bell K.S."/>
            <person name="Sebaihia M."/>
            <person name="Pritchard L."/>
            <person name="Holden M.T.G."/>
            <person name="Hyman L.J."/>
            <person name="Holeva M.C."/>
            <person name="Thomson N.R."/>
            <person name="Bentley S.D."/>
            <person name="Churcher L.J.C."/>
            <person name="Mungall K."/>
            <person name="Atkin R."/>
            <person name="Bason N."/>
            <person name="Brooks K."/>
            <person name="Chillingworth T."/>
            <person name="Clark K."/>
            <person name="Doggett J."/>
            <person name="Fraser A."/>
            <person name="Hance Z."/>
            <person name="Hauser H."/>
            <person name="Jagels K."/>
            <person name="Moule S."/>
            <person name="Norbertczak H."/>
            <person name="Ormond D."/>
            <person name="Price C."/>
            <person name="Quail M.A."/>
            <person name="Sanders M."/>
            <person name="Walker D."/>
            <person name="Whitehead S."/>
            <person name="Salmond G.P.C."/>
            <person name="Birch P.R.J."/>
            <person name="Parkhill J."/>
            <person name="Toth I.K."/>
        </authorList>
    </citation>
    <scope>NUCLEOTIDE SEQUENCE [LARGE SCALE GENOMIC DNA]</scope>
    <source>
        <strain>SCRI 1043 / ATCC BAA-672</strain>
    </source>
</reference>
<reference key="2">
    <citation type="journal article" date="2011" name="RNA Biol.">
        <title>Csy4 is responsible for CRISPR RNA processing in Pectobacterium atrosepticum.</title>
        <authorList>
            <person name="Przybilski R."/>
            <person name="Richter C."/>
            <person name="Gristwood T."/>
            <person name="Clulow J.S."/>
            <person name="Vercoe R.B."/>
            <person name="Fineran P.C."/>
        </authorList>
    </citation>
    <scope>INDUCTION</scope>
    <scope>OPERON STRUCTURE</scope>
    <source>
        <strain>SCRI 1043 / ATCC BAA-672</strain>
    </source>
</reference>
<reference key="3">
    <citation type="journal article" date="2012" name="PLoS ONE">
        <title>In vivo protein interactions and complex formation in the Pectobacterium atrosepticum subtype I-F CRISPR/Cas System.</title>
        <authorList>
            <person name="Richter C."/>
            <person name="Gristwood T."/>
            <person name="Clulow J.S."/>
            <person name="Fineran P.C."/>
        </authorList>
    </citation>
    <scope>IDENTIFICATION BY MASS SPECTROMETRY</scope>
    <scope>INTERACTION WITH CAS3</scope>
    <scope>SUBUNIT</scope>
    <source>
        <strain>SCRI 1043 / ATCC BAA-672</strain>
    </source>
</reference>
<reference key="4">
    <citation type="journal article" date="2013" name="PLoS Genet.">
        <title>Cytotoxic chromosomal targeting by CRISPR/Cas systems can reshape bacterial genomes and expel or remodel pathogenicity islands.</title>
        <authorList>
            <person name="Vercoe R.B."/>
            <person name="Chang J.T."/>
            <person name="Dy R.L."/>
            <person name="Taylor C."/>
            <person name="Gristwood T."/>
            <person name="Clulow J.S."/>
            <person name="Richter C."/>
            <person name="Przybilski R."/>
            <person name="Pitman A.R."/>
            <person name="Fineran P.C."/>
        </authorList>
    </citation>
    <scope>FUNCTION</scope>
    <scope>BIOTECHNOLOGY</scope>
    <source>
        <strain>SCRI 1043 / ATCC BAA-672</strain>
    </source>
</reference>
<sequence length="326" mass="36258">MDNAFSPSDLKTILHSKRANVYYLQHCRILVNGGRVEYVTEEGNQSLYWNIPIANTSVVMLGTGTSVTQAAMREFARAGVMIGFCGGGGTPLFAANEAEVAVSWLSPQSEYRPTEYLQDWVSFWFDDEKRLAAAIAFQQVRITQIRQHWLGSRLSRESRFTFKSEHLQALLDRYQKGLTDCRTSNDVLVQEAMMTKALYRLAANAVSYGDFTRAKRGGGTDLANRFLDHGNYLAYGLAAVSTWVLGLPHGLAVLHGKTRRGGLVFDVADLIKDALVLPQAFIAAMEGEDEQEFRQRCLTAFQQSEALDVMIGSLQDVASKLSQVVR</sequence>
<comment type="function">
    <text evidence="1 5">CRISPR (clustered regularly interspaced short palindromic repeat), is an adaptive immune system that provides protection against mobile genetic elements (viruses, transposable elements and conjugative plasmids). CRISPR clusters contain sequences complementary to antecedent mobile elements and target invading nucleic acids. CRISPR clusters are transcribed and processed into CRISPR RNA (crRNA). Acts as a dsDNA endonuclease. Involved in the integration of spacer DNA into the CRISPR cassette (By similarity).</text>
</comment>
<comment type="cofactor">
    <cofactor evidence="2">
        <name>Mg(2+)</name>
        <dbReference type="ChEBI" id="CHEBI:18420"/>
    </cofactor>
    <cofactor evidence="2">
        <name>Mn(2+)</name>
        <dbReference type="ChEBI" id="CHEBI:29035"/>
    </cofactor>
</comment>
<comment type="subunit">
    <text evidence="1 4">Homodimer (By similarity). Interacts with Cas3, in the absence of crRNA.</text>
</comment>
<comment type="induction">
    <text evidence="3">Expressed in late exponential phase (other phases not tested); part of a large cas-CRISPR3 polycistronic operon.</text>
</comment>
<comment type="biotechnology">
    <text evidence="5">If the spacer DNA has a perfect match in the chromosome then toxicity results. Suppression of the toxic effects occurs via mutations in the CRISPR/Cas machinery, or via target deletion, which might contribute to genome plasticity. This CRISPR/Cas system can be used to remove genomic islands, and possibly other genomic regions.</text>
</comment>
<comment type="similarity">
    <text evidence="2">Belongs to the CRISPR-associated endonuclease Cas1 family.</text>
</comment>
<feature type="chain" id="PRO_0000430240" description="CRISPR-associated endonuclease Cas1">
    <location>
        <begin position="1"/>
        <end position="326"/>
    </location>
</feature>
<feature type="binding site" evidence="2">
    <location>
        <position position="191"/>
    </location>
    <ligand>
        <name>Mn(2+)</name>
        <dbReference type="ChEBI" id="CHEBI:29035"/>
    </ligand>
</feature>
<feature type="binding site" evidence="2">
    <location>
        <position position="255"/>
    </location>
    <ligand>
        <name>Mn(2+)</name>
        <dbReference type="ChEBI" id="CHEBI:29035"/>
    </ligand>
</feature>
<feature type="binding site" evidence="2">
    <location>
        <position position="269"/>
    </location>
    <ligand>
        <name>Mn(2+)</name>
        <dbReference type="ChEBI" id="CHEBI:29035"/>
    </ligand>
</feature>
<feature type="strand" evidence="6">
    <location>
        <begin position="14"/>
        <end position="16"/>
    </location>
</feature>
<feature type="turn" evidence="6">
    <location>
        <begin position="17"/>
        <end position="20"/>
    </location>
</feature>
<feature type="strand" evidence="6">
    <location>
        <begin position="21"/>
        <end position="24"/>
    </location>
</feature>
<feature type="strand" evidence="6">
    <location>
        <begin position="26"/>
        <end position="32"/>
    </location>
</feature>
<feature type="strand" evidence="6">
    <location>
        <begin position="35"/>
        <end position="40"/>
    </location>
</feature>
<feature type="strand" evidence="6">
    <location>
        <begin position="58"/>
        <end position="61"/>
    </location>
</feature>
<feature type="strand" evidence="6">
    <location>
        <begin position="65"/>
        <end position="68"/>
    </location>
</feature>
<feature type="helix" evidence="6">
    <location>
        <begin position="69"/>
        <end position="78"/>
    </location>
</feature>
<feature type="strand" evidence="6">
    <location>
        <begin position="81"/>
        <end position="85"/>
    </location>
</feature>
<feature type="turn" evidence="6">
    <location>
        <begin position="87"/>
        <end position="89"/>
    </location>
</feature>
<feature type="strand" evidence="6">
    <location>
        <begin position="91"/>
        <end position="95"/>
    </location>
</feature>
<feature type="helix" evidence="6">
    <location>
        <begin position="116"/>
        <end position="124"/>
    </location>
</feature>
<feature type="helix" evidence="6">
    <location>
        <begin position="127"/>
        <end position="150"/>
    </location>
</feature>
<feature type="helix" evidence="6">
    <location>
        <begin position="152"/>
        <end position="155"/>
    </location>
</feature>
<feature type="helix" evidence="6">
    <location>
        <begin position="164"/>
        <end position="180"/>
    </location>
</feature>
<feature type="helix" evidence="6">
    <location>
        <begin position="184"/>
        <end position="205"/>
    </location>
</feature>
<feature type="helix" evidence="6">
    <location>
        <begin position="215"/>
        <end position="217"/>
    </location>
</feature>
<feature type="helix" evidence="6">
    <location>
        <begin position="222"/>
        <end position="245"/>
    </location>
</feature>
<feature type="strand" evidence="6">
    <location>
        <begin position="253"/>
        <end position="255"/>
    </location>
</feature>
<feature type="helix" evidence="6">
    <location>
        <begin position="262"/>
        <end position="268"/>
    </location>
</feature>
<feature type="turn" evidence="6">
    <location>
        <begin position="269"/>
        <end position="271"/>
    </location>
</feature>
<feature type="helix" evidence="6">
    <location>
        <begin position="272"/>
        <end position="286"/>
    </location>
</feature>
<feature type="helix" evidence="6">
    <location>
        <begin position="290"/>
        <end position="304"/>
    </location>
</feature>
<feature type="helix" evidence="6">
    <location>
        <begin position="306"/>
        <end position="321"/>
    </location>
</feature>
<dbReference type="EC" id="3.1.-.-" evidence="2"/>
<dbReference type="EMBL" id="BX950851">
    <property type="protein sequence ID" value="CAG76577.1"/>
    <property type="molecule type" value="Genomic_DNA"/>
</dbReference>
<dbReference type="RefSeq" id="WP_011095179.1">
    <property type="nucleotide sequence ID" value="NC_004547.2"/>
</dbReference>
<dbReference type="PDB" id="5FCL">
    <property type="method" value="X-ray"/>
    <property type="resolution" value="2.70 A"/>
    <property type="chains" value="A/B/C/D/E/F=1-326"/>
</dbReference>
<dbReference type="PDBsum" id="5FCL"/>
<dbReference type="SMR" id="Q6D0X0"/>
<dbReference type="STRING" id="218491.ECA3679"/>
<dbReference type="KEGG" id="eca:ECA3679"/>
<dbReference type="eggNOG" id="COG1518">
    <property type="taxonomic scope" value="Bacteria"/>
</dbReference>
<dbReference type="HOGENOM" id="CLU_074119_0_0_6"/>
<dbReference type="OrthoDB" id="1662073at2"/>
<dbReference type="Proteomes" id="UP000007966">
    <property type="component" value="Chromosome"/>
</dbReference>
<dbReference type="GO" id="GO:0003677">
    <property type="term" value="F:DNA binding"/>
    <property type="evidence" value="ECO:0007669"/>
    <property type="project" value="UniProtKB-KW"/>
</dbReference>
<dbReference type="GO" id="GO:0004520">
    <property type="term" value="F:DNA endonuclease activity"/>
    <property type="evidence" value="ECO:0007669"/>
    <property type="project" value="InterPro"/>
</dbReference>
<dbReference type="GO" id="GO:0046872">
    <property type="term" value="F:metal ion binding"/>
    <property type="evidence" value="ECO:0007669"/>
    <property type="project" value="UniProtKB-UniRule"/>
</dbReference>
<dbReference type="GO" id="GO:0051607">
    <property type="term" value="P:defense response to virus"/>
    <property type="evidence" value="ECO:0007669"/>
    <property type="project" value="UniProtKB-UniRule"/>
</dbReference>
<dbReference type="GO" id="GO:0043571">
    <property type="term" value="P:maintenance of CRISPR repeat elements"/>
    <property type="evidence" value="ECO:0007669"/>
    <property type="project" value="UniProtKB-UniRule"/>
</dbReference>
<dbReference type="CDD" id="cd09718">
    <property type="entry name" value="Cas1_I-F"/>
    <property type="match status" value="1"/>
</dbReference>
<dbReference type="Gene3D" id="1.20.120.920">
    <property type="entry name" value="CRISPR-associated endonuclease Cas1, C-terminal domain"/>
    <property type="match status" value="1"/>
</dbReference>
<dbReference type="Gene3D" id="3.100.10.20">
    <property type="entry name" value="CRISPR-associated endonuclease Cas1, N-terminal domain"/>
    <property type="match status" value="1"/>
</dbReference>
<dbReference type="HAMAP" id="MF_01470">
    <property type="entry name" value="Cas1"/>
    <property type="match status" value="1"/>
</dbReference>
<dbReference type="InterPro" id="IPR002729">
    <property type="entry name" value="CRISPR-assoc_Cas1"/>
</dbReference>
<dbReference type="InterPro" id="IPR042206">
    <property type="entry name" value="CRISPR-assoc_Cas1_C"/>
</dbReference>
<dbReference type="InterPro" id="IPR042211">
    <property type="entry name" value="CRISPR-assoc_Cas1_N"/>
</dbReference>
<dbReference type="InterPro" id="IPR019857">
    <property type="entry name" value="CRISPR-assoc_Cas1_YPEST-subtyp"/>
</dbReference>
<dbReference type="NCBIfam" id="TIGR00287">
    <property type="entry name" value="cas1"/>
    <property type="match status" value="1"/>
</dbReference>
<dbReference type="NCBIfam" id="TIGR03637">
    <property type="entry name" value="cas1_YPEST"/>
    <property type="match status" value="1"/>
</dbReference>
<dbReference type="Pfam" id="PF01867">
    <property type="entry name" value="Cas_Cas1"/>
    <property type="match status" value="1"/>
</dbReference>
<organism>
    <name type="scientific">Pectobacterium atrosepticum (strain SCRI 1043 / ATCC BAA-672)</name>
    <name type="common">Erwinia carotovora subsp. atroseptica</name>
    <dbReference type="NCBI Taxonomy" id="218491"/>
    <lineage>
        <taxon>Bacteria</taxon>
        <taxon>Pseudomonadati</taxon>
        <taxon>Pseudomonadota</taxon>
        <taxon>Gammaproteobacteria</taxon>
        <taxon>Enterobacterales</taxon>
        <taxon>Pectobacteriaceae</taxon>
        <taxon>Pectobacterium</taxon>
    </lineage>
</organism>
<accession>Q6D0X0</accession>